<gene>
    <name evidence="1" type="primary">apt</name>
    <name type="ordered locus">GWCH70_2511</name>
</gene>
<comment type="function">
    <text evidence="1">Catalyzes a salvage reaction resulting in the formation of AMP, that is energically less costly than de novo synthesis.</text>
</comment>
<comment type="catalytic activity">
    <reaction evidence="1">
        <text>AMP + diphosphate = 5-phospho-alpha-D-ribose 1-diphosphate + adenine</text>
        <dbReference type="Rhea" id="RHEA:16609"/>
        <dbReference type="ChEBI" id="CHEBI:16708"/>
        <dbReference type="ChEBI" id="CHEBI:33019"/>
        <dbReference type="ChEBI" id="CHEBI:58017"/>
        <dbReference type="ChEBI" id="CHEBI:456215"/>
        <dbReference type="EC" id="2.4.2.7"/>
    </reaction>
</comment>
<comment type="pathway">
    <text evidence="1">Purine metabolism; AMP biosynthesis via salvage pathway; AMP from adenine: step 1/1.</text>
</comment>
<comment type="subunit">
    <text evidence="1">Homodimer.</text>
</comment>
<comment type="subcellular location">
    <subcellularLocation>
        <location evidence="1">Cytoplasm</location>
    </subcellularLocation>
</comment>
<comment type="similarity">
    <text evidence="1">Belongs to the purine/pyrimidine phosphoribosyltransferase family.</text>
</comment>
<organism>
    <name type="scientific">Geobacillus sp. (strain WCH70)</name>
    <dbReference type="NCBI Taxonomy" id="471223"/>
    <lineage>
        <taxon>Bacteria</taxon>
        <taxon>Bacillati</taxon>
        <taxon>Bacillota</taxon>
        <taxon>Bacilli</taxon>
        <taxon>Bacillales</taxon>
        <taxon>Anoxybacillaceae</taxon>
        <taxon>Geobacillus</taxon>
    </lineage>
</organism>
<keyword id="KW-0963">Cytoplasm</keyword>
<keyword id="KW-0328">Glycosyltransferase</keyword>
<keyword id="KW-0660">Purine salvage</keyword>
<keyword id="KW-0808">Transferase</keyword>
<name>APT_GEOSW</name>
<proteinExistence type="inferred from homology"/>
<dbReference type="EC" id="2.4.2.7" evidence="1"/>
<dbReference type="EMBL" id="CP001638">
    <property type="protein sequence ID" value="ACS25206.1"/>
    <property type="molecule type" value="Genomic_DNA"/>
</dbReference>
<dbReference type="SMR" id="C5D514"/>
<dbReference type="STRING" id="471223.GWCH70_2511"/>
<dbReference type="KEGG" id="gwc:GWCH70_2511"/>
<dbReference type="eggNOG" id="COG0503">
    <property type="taxonomic scope" value="Bacteria"/>
</dbReference>
<dbReference type="HOGENOM" id="CLU_063339_3_0_9"/>
<dbReference type="OrthoDB" id="9803963at2"/>
<dbReference type="UniPathway" id="UPA00588">
    <property type="reaction ID" value="UER00646"/>
</dbReference>
<dbReference type="GO" id="GO:0005737">
    <property type="term" value="C:cytoplasm"/>
    <property type="evidence" value="ECO:0007669"/>
    <property type="project" value="UniProtKB-SubCell"/>
</dbReference>
<dbReference type="GO" id="GO:0002055">
    <property type="term" value="F:adenine binding"/>
    <property type="evidence" value="ECO:0007669"/>
    <property type="project" value="TreeGrafter"/>
</dbReference>
<dbReference type="GO" id="GO:0003999">
    <property type="term" value="F:adenine phosphoribosyltransferase activity"/>
    <property type="evidence" value="ECO:0007669"/>
    <property type="project" value="UniProtKB-UniRule"/>
</dbReference>
<dbReference type="GO" id="GO:0016208">
    <property type="term" value="F:AMP binding"/>
    <property type="evidence" value="ECO:0007669"/>
    <property type="project" value="TreeGrafter"/>
</dbReference>
<dbReference type="GO" id="GO:0006168">
    <property type="term" value="P:adenine salvage"/>
    <property type="evidence" value="ECO:0007669"/>
    <property type="project" value="InterPro"/>
</dbReference>
<dbReference type="GO" id="GO:0044209">
    <property type="term" value="P:AMP salvage"/>
    <property type="evidence" value="ECO:0007669"/>
    <property type="project" value="UniProtKB-UniRule"/>
</dbReference>
<dbReference type="GO" id="GO:0006166">
    <property type="term" value="P:purine ribonucleoside salvage"/>
    <property type="evidence" value="ECO:0007669"/>
    <property type="project" value="UniProtKB-KW"/>
</dbReference>
<dbReference type="CDD" id="cd06223">
    <property type="entry name" value="PRTases_typeI"/>
    <property type="match status" value="1"/>
</dbReference>
<dbReference type="FunFam" id="3.40.50.2020:FF:000004">
    <property type="entry name" value="Adenine phosphoribosyltransferase"/>
    <property type="match status" value="1"/>
</dbReference>
<dbReference type="Gene3D" id="3.40.50.2020">
    <property type="match status" value="1"/>
</dbReference>
<dbReference type="HAMAP" id="MF_00004">
    <property type="entry name" value="Aden_phosphoribosyltr"/>
    <property type="match status" value="1"/>
</dbReference>
<dbReference type="InterPro" id="IPR005764">
    <property type="entry name" value="Ade_phspho_trans"/>
</dbReference>
<dbReference type="InterPro" id="IPR000836">
    <property type="entry name" value="PRibTrfase_dom"/>
</dbReference>
<dbReference type="InterPro" id="IPR029057">
    <property type="entry name" value="PRTase-like"/>
</dbReference>
<dbReference type="InterPro" id="IPR050054">
    <property type="entry name" value="UPRTase/APRTase"/>
</dbReference>
<dbReference type="NCBIfam" id="TIGR01090">
    <property type="entry name" value="apt"/>
    <property type="match status" value="1"/>
</dbReference>
<dbReference type="NCBIfam" id="NF002633">
    <property type="entry name" value="PRK02304.1-2"/>
    <property type="match status" value="1"/>
</dbReference>
<dbReference type="NCBIfam" id="NF002634">
    <property type="entry name" value="PRK02304.1-3"/>
    <property type="match status" value="1"/>
</dbReference>
<dbReference type="NCBIfam" id="NF002636">
    <property type="entry name" value="PRK02304.1-5"/>
    <property type="match status" value="1"/>
</dbReference>
<dbReference type="PANTHER" id="PTHR32315">
    <property type="entry name" value="ADENINE PHOSPHORIBOSYLTRANSFERASE"/>
    <property type="match status" value="1"/>
</dbReference>
<dbReference type="PANTHER" id="PTHR32315:SF3">
    <property type="entry name" value="ADENINE PHOSPHORIBOSYLTRANSFERASE"/>
    <property type="match status" value="1"/>
</dbReference>
<dbReference type="Pfam" id="PF00156">
    <property type="entry name" value="Pribosyltran"/>
    <property type="match status" value="1"/>
</dbReference>
<dbReference type="SUPFAM" id="SSF53271">
    <property type="entry name" value="PRTase-like"/>
    <property type="match status" value="1"/>
</dbReference>
<evidence type="ECO:0000255" key="1">
    <source>
        <dbReference type="HAMAP-Rule" id="MF_00004"/>
    </source>
</evidence>
<sequence length="170" mass="18834">MDLKQYVTIVPDFPKPGIMFKDITTLMDKGEVYKYATDQIVEYAREKKIDIVVGPEARGFIIGCPVAYALGVGFAPVRKEGKLPREVVRVEYGLEYGKDVLTMHKDAIKPGQRVLITDDLLATGGTIRATIQLVEQLGGVVAGIAFLIELTELEGRKKLEGYDILALMQF</sequence>
<reference key="1">
    <citation type="submission" date="2009-06" db="EMBL/GenBank/DDBJ databases">
        <title>Complete sequence of chromosome of Geopacillus sp. WCH70.</title>
        <authorList>
            <consortium name="US DOE Joint Genome Institute"/>
            <person name="Lucas S."/>
            <person name="Copeland A."/>
            <person name="Lapidus A."/>
            <person name="Glavina del Rio T."/>
            <person name="Dalin E."/>
            <person name="Tice H."/>
            <person name="Bruce D."/>
            <person name="Goodwin L."/>
            <person name="Pitluck S."/>
            <person name="Chertkov O."/>
            <person name="Brettin T."/>
            <person name="Detter J.C."/>
            <person name="Han C."/>
            <person name="Larimer F."/>
            <person name="Land M."/>
            <person name="Hauser L."/>
            <person name="Kyrpides N."/>
            <person name="Mikhailova N."/>
            <person name="Brumm P."/>
            <person name="Mead D.A."/>
            <person name="Richardson P."/>
        </authorList>
    </citation>
    <scope>NUCLEOTIDE SEQUENCE [LARGE SCALE GENOMIC DNA]</scope>
    <source>
        <strain>WCH70</strain>
    </source>
</reference>
<protein>
    <recommendedName>
        <fullName evidence="1">Adenine phosphoribosyltransferase</fullName>
        <shortName evidence="1">APRT</shortName>
        <ecNumber evidence="1">2.4.2.7</ecNumber>
    </recommendedName>
</protein>
<feature type="chain" id="PRO_1000201666" description="Adenine phosphoribosyltransferase">
    <location>
        <begin position="1"/>
        <end position="170"/>
    </location>
</feature>
<accession>C5D514</accession>